<gene>
    <name type="ORF">IIV6-101L</name>
</gene>
<keyword id="KW-1185">Reference proteome</keyword>
<feature type="chain" id="PRO_0000377987" description="Uncharacterized protein 101L">
    <location>
        <begin position="1"/>
        <end position="234"/>
    </location>
</feature>
<name>101L_IIV6</name>
<organismHost>
    <name type="scientific">Acheta domesticus</name>
    <name type="common">House cricket</name>
    <dbReference type="NCBI Taxonomy" id="6997"/>
</organismHost>
<organismHost>
    <name type="scientific">Chilo suppressalis</name>
    <name type="common">Asiatic rice borer moth</name>
    <dbReference type="NCBI Taxonomy" id="168631"/>
</organismHost>
<organismHost>
    <name type="scientific">Gryllus bimaculatus</name>
    <name type="common">Two-spotted cricket</name>
    <dbReference type="NCBI Taxonomy" id="6999"/>
</organismHost>
<organismHost>
    <name type="scientific">Gryllus campestris</name>
    <dbReference type="NCBI Taxonomy" id="58607"/>
</organismHost>
<organismHost>
    <name type="scientific">Spodoptera frugiperda</name>
    <name type="common">Fall armyworm</name>
    <dbReference type="NCBI Taxonomy" id="7108"/>
</organismHost>
<organism>
    <name type="scientific">Invertebrate iridescent virus 6</name>
    <name type="common">IIV-6</name>
    <name type="synonym">Chilo iridescent virus</name>
    <dbReference type="NCBI Taxonomy" id="176652"/>
    <lineage>
        <taxon>Viruses</taxon>
        <taxon>Varidnaviria</taxon>
        <taxon>Bamfordvirae</taxon>
        <taxon>Nucleocytoviricota</taxon>
        <taxon>Megaviricetes</taxon>
        <taxon>Pimascovirales</taxon>
        <taxon>Iridoviridae</taxon>
        <taxon>Betairidovirinae</taxon>
        <taxon>Iridovirus</taxon>
    </lineage>
</organism>
<accession>O55722</accession>
<proteinExistence type="predicted"/>
<dbReference type="EMBL" id="AF303741">
    <property type="protein sequence ID" value="AAB94433.1"/>
    <property type="molecule type" value="Genomic_DNA"/>
</dbReference>
<dbReference type="PIR" id="T03059">
    <property type="entry name" value="T03059"/>
</dbReference>
<dbReference type="RefSeq" id="NP_149564.1">
    <property type="nucleotide sequence ID" value="NC_003038.1"/>
</dbReference>
<dbReference type="SMR" id="O55722"/>
<dbReference type="KEGG" id="vg:1733078"/>
<dbReference type="Proteomes" id="UP000001359">
    <property type="component" value="Genome"/>
</dbReference>
<dbReference type="InterPro" id="IPR008893">
    <property type="entry name" value="WGR_domain"/>
</dbReference>
<dbReference type="SMART" id="SM00773">
    <property type="entry name" value="WGR"/>
    <property type="match status" value="1"/>
</dbReference>
<sequence length="234" mass="27043">MELYCKLIMVTQNNNNKYYEMKYEGGDTFTVIYGRVDQSSTVISKPFKEWDKIKNSKLKKGYKDVSSKSVSSVESNEREIENKSIKEFIHKMRAYTNLLVSNTYSVNSKEVSSSQISNAQKLLNKISSMDMDENVDEINELLILLYTCIPRKIKNVKKCILPYIDIKQTIIQEQDNLDALSSQLKKNVSQNNKINNILNVHFSKFLEEASSSFNIDVCKLKSILNEDKTFLEMI</sequence>
<protein>
    <recommendedName>
        <fullName>Uncharacterized protein 101L</fullName>
    </recommendedName>
</protein>
<reference key="1">
    <citation type="journal article" date="2001" name="Virology">
        <title>Analysis of the first complete DNA sequence of an invertebrate iridovirus: coding strategy of the genome of Chilo iridescent virus.</title>
        <authorList>
            <person name="Jakob N.J."/>
            <person name="Mueller K."/>
            <person name="Bahr U."/>
            <person name="Darai G."/>
        </authorList>
    </citation>
    <scope>NUCLEOTIDE SEQUENCE [LARGE SCALE GENOMIC DNA]</scope>
</reference>
<reference key="2">
    <citation type="journal article" date="2007" name="Virol. J.">
        <title>Comparative genomic analysis of the family Iridoviridae: re-annotating and defining the core set of iridovirus genes.</title>
        <authorList>
            <person name="Eaton H.E."/>
            <person name="Metcalf J."/>
            <person name="Penny E."/>
            <person name="Tcherepanov V."/>
            <person name="Upton C."/>
            <person name="Brunetti C.R."/>
        </authorList>
    </citation>
    <scope>GENOME REANNOTATION</scope>
</reference>